<evidence type="ECO:0000255" key="1">
    <source>
        <dbReference type="PROSITE-ProRule" id="PRU00395"/>
    </source>
</evidence>
<evidence type="ECO:0000269" key="2">
    <source>
    </source>
</evidence>
<evidence type="ECO:0000303" key="3">
    <source>
    </source>
</evidence>
<evidence type="ECO:0000305" key="4"/>
<accession>C0HKJ1</accession>
<name>CYMEI_MELDN</name>
<protein>
    <recommendedName>
        <fullName evidence="3">Cyclotide mden-I</fullName>
    </recommendedName>
</protein>
<feature type="peptide" id="PRO_0000441357" description="Cyclotide mden-I" evidence="2">
    <location>
        <begin position="1"/>
        <end position="30"/>
    </location>
</feature>
<feature type="disulfide bond" evidence="1">
    <location>
        <begin position="4"/>
        <end position="20"/>
    </location>
</feature>
<feature type="disulfide bond" evidence="1">
    <location>
        <begin position="8"/>
        <end position="22"/>
    </location>
</feature>
<feature type="disulfide bond" evidence="1">
    <location>
        <begin position="13"/>
        <end position="27"/>
    </location>
</feature>
<feature type="cross-link" description="Cyclopeptide (Gly-Asn)" evidence="3">
    <location>
        <begin position="1"/>
        <end position="30"/>
    </location>
</feature>
<proteinExistence type="evidence at protein level"/>
<comment type="function">
    <text evidence="1">Probably participates in a plant defense mechanism.</text>
</comment>
<comment type="domain">
    <text evidence="4">The presence of a 'disulfide through disulfide knot' structurally defines this protein as a knottin.</text>
</comment>
<comment type="PTM">
    <text evidence="1">This is a cyclic peptide.</text>
</comment>
<comment type="similarity">
    <text evidence="1">Belongs to the cyclotide family. Bracelet subfamily.</text>
</comment>
<comment type="caution">
    <text evidence="1">This peptide is cyclic. The start position was chosen by similarity to Oak1 (kalata B1) for which the DNA sequence is known.</text>
</comment>
<organism evidence="3">
    <name type="scientific">Melicytus dentatus</name>
    <name type="common">Tree violet</name>
    <dbReference type="NCBI Taxonomy" id="491106"/>
    <lineage>
        <taxon>Eukaryota</taxon>
        <taxon>Viridiplantae</taxon>
        <taxon>Streptophyta</taxon>
        <taxon>Embryophyta</taxon>
        <taxon>Tracheophyta</taxon>
        <taxon>Spermatophyta</taxon>
        <taxon>Magnoliopsida</taxon>
        <taxon>eudicotyledons</taxon>
        <taxon>Gunneridae</taxon>
        <taxon>Pentapetalae</taxon>
        <taxon>rosids</taxon>
        <taxon>fabids</taxon>
        <taxon>Malpighiales</taxon>
        <taxon>Violaceae</taxon>
        <taxon>Melicytus</taxon>
    </lineage>
</organism>
<dbReference type="SMR" id="C0HKJ1"/>
<dbReference type="GO" id="GO:0006952">
    <property type="term" value="P:defense response"/>
    <property type="evidence" value="ECO:0007669"/>
    <property type="project" value="UniProtKB-KW"/>
</dbReference>
<dbReference type="InterPro" id="IPR005535">
    <property type="entry name" value="Cyclotide"/>
</dbReference>
<dbReference type="InterPro" id="IPR012323">
    <property type="entry name" value="Cyclotide_bracelet_CS"/>
</dbReference>
<dbReference type="InterPro" id="IPR036146">
    <property type="entry name" value="Cyclotide_sf"/>
</dbReference>
<dbReference type="Pfam" id="PF03784">
    <property type="entry name" value="Cyclotide"/>
    <property type="match status" value="1"/>
</dbReference>
<dbReference type="PIRSF" id="PIRSF037891">
    <property type="entry name" value="Cycloviolacin"/>
    <property type="match status" value="1"/>
</dbReference>
<dbReference type="SUPFAM" id="SSF57038">
    <property type="entry name" value="Cyclotides"/>
    <property type="match status" value="1"/>
</dbReference>
<dbReference type="PROSITE" id="PS51052">
    <property type="entry name" value="CYCLOTIDE"/>
    <property type="match status" value="1"/>
</dbReference>
<dbReference type="PROSITE" id="PS60008">
    <property type="entry name" value="CYCLOTIDE_BRACELET"/>
    <property type="match status" value="1"/>
</dbReference>
<keyword id="KW-0903">Direct protein sequencing</keyword>
<keyword id="KW-1015">Disulfide bond</keyword>
<keyword id="KW-0611">Plant defense</keyword>
<sequence length="30" mass="3197">GIPCGESCVYIPCITTAIGCSCKNKVCYRN</sequence>
<reference evidence="4" key="1">
    <citation type="journal article" date="2017" name="J. Nat. Prod.">
        <title>Understanding the Diversity and Distribution of Cyclotides from Plants of Varied Genetic Origin.</title>
        <authorList>
            <person name="Ravipati A.S."/>
            <person name="Poth A.G."/>
            <person name="Troeira Henriques S."/>
            <person name="Bhandari M."/>
            <person name="Huang Y.H."/>
            <person name="Nino J."/>
            <person name="Colgrave M.L."/>
            <person name="Craik D.J."/>
        </authorList>
    </citation>
    <scope>PROTEIN SEQUENCE</scope>
</reference>